<proteinExistence type="inferred from homology"/>
<feature type="chain" id="PRO_0000277750" description="Integration host factor subunit alpha">
    <location>
        <begin position="1"/>
        <end position="102"/>
    </location>
</feature>
<feature type="region of interest" description="Disordered" evidence="2">
    <location>
        <begin position="49"/>
        <end position="71"/>
    </location>
</feature>
<keyword id="KW-0233">DNA recombination</keyword>
<keyword id="KW-0238">DNA-binding</keyword>
<keyword id="KW-0804">Transcription</keyword>
<keyword id="KW-0805">Transcription regulation</keyword>
<keyword id="KW-0810">Translation regulation</keyword>
<sequence length="102" mass="11525">MALTKAELTDLLFENIGLNKREAKEIVECFYEEMRTALQNGDGVKLSGFGNFQLRTKPQRPGRNPKTGEEIPISARRVVTFHASQKLKSMVEANYRGEPNVN</sequence>
<evidence type="ECO:0000255" key="1">
    <source>
        <dbReference type="HAMAP-Rule" id="MF_00380"/>
    </source>
</evidence>
<evidence type="ECO:0000256" key="2">
    <source>
        <dbReference type="SAM" id="MobiDB-lite"/>
    </source>
</evidence>
<gene>
    <name evidence="1" type="primary">ihfA</name>
    <name evidence="1" type="synonym">himA</name>
    <name type="ordered locus">Neut_2325</name>
</gene>
<name>IHFA_NITEC</name>
<reference key="1">
    <citation type="journal article" date="2007" name="Environ. Microbiol.">
        <title>Whole-genome analysis of the ammonia-oxidizing bacterium, Nitrosomonas eutropha C91: implications for niche adaptation.</title>
        <authorList>
            <person name="Stein L.Y."/>
            <person name="Arp D.J."/>
            <person name="Berube P.M."/>
            <person name="Chain P.S."/>
            <person name="Hauser L."/>
            <person name="Jetten M.S."/>
            <person name="Klotz M.G."/>
            <person name="Larimer F.W."/>
            <person name="Norton J.M."/>
            <person name="Op den Camp H.J.M."/>
            <person name="Shin M."/>
            <person name="Wei X."/>
        </authorList>
    </citation>
    <scope>NUCLEOTIDE SEQUENCE [LARGE SCALE GENOMIC DNA]</scope>
    <source>
        <strain>DSM 101675 / C91 / Nm57</strain>
    </source>
</reference>
<protein>
    <recommendedName>
        <fullName evidence="1">Integration host factor subunit alpha</fullName>
        <shortName evidence="1">IHF-alpha</shortName>
    </recommendedName>
</protein>
<accession>Q0ADP0</accession>
<dbReference type="EMBL" id="CP000450">
    <property type="protein sequence ID" value="ABI60542.1"/>
    <property type="molecule type" value="Genomic_DNA"/>
</dbReference>
<dbReference type="RefSeq" id="WP_011635315.1">
    <property type="nucleotide sequence ID" value="NC_008344.1"/>
</dbReference>
<dbReference type="SMR" id="Q0ADP0"/>
<dbReference type="STRING" id="335283.Neut_2325"/>
<dbReference type="KEGG" id="net:Neut_2325"/>
<dbReference type="eggNOG" id="COG0776">
    <property type="taxonomic scope" value="Bacteria"/>
</dbReference>
<dbReference type="HOGENOM" id="CLU_105066_1_0_4"/>
<dbReference type="OrthoDB" id="9797747at2"/>
<dbReference type="Proteomes" id="UP000001966">
    <property type="component" value="Chromosome"/>
</dbReference>
<dbReference type="GO" id="GO:0005829">
    <property type="term" value="C:cytosol"/>
    <property type="evidence" value="ECO:0007669"/>
    <property type="project" value="TreeGrafter"/>
</dbReference>
<dbReference type="GO" id="GO:0003677">
    <property type="term" value="F:DNA binding"/>
    <property type="evidence" value="ECO:0007669"/>
    <property type="project" value="UniProtKB-UniRule"/>
</dbReference>
<dbReference type="GO" id="GO:0030527">
    <property type="term" value="F:structural constituent of chromatin"/>
    <property type="evidence" value="ECO:0007669"/>
    <property type="project" value="InterPro"/>
</dbReference>
<dbReference type="GO" id="GO:0006310">
    <property type="term" value="P:DNA recombination"/>
    <property type="evidence" value="ECO:0007669"/>
    <property type="project" value="UniProtKB-UniRule"/>
</dbReference>
<dbReference type="GO" id="GO:0009893">
    <property type="term" value="P:positive regulation of metabolic process"/>
    <property type="evidence" value="ECO:0007669"/>
    <property type="project" value="UniProtKB-ARBA"/>
</dbReference>
<dbReference type="GO" id="GO:0006355">
    <property type="term" value="P:regulation of DNA-templated transcription"/>
    <property type="evidence" value="ECO:0007669"/>
    <property type="project" value="UniProtKB-UniRule"/>
</dbReference>
<dbReference type="GO" id="GO:0006417">
    <property type="term" value="P:regulation of translation"/>
    <property type="evidence" value="ECO:0007669"/>
    <property type="project" value="UniProtKB-UniRule"/>
</dbReference>
<dbReference type="CDD" id="cd13835">
    <property type="entry name" value="IHF_A"/>
    <property type="match status" value="1"/>
</dbReference>
<dbReference type="FunFam" id="4.10.520.10:FF:000002">
    <property type="entry name" value="Integration host factor subunit alpha"/>
    <property type="match status" value="1"/>
</dbReference>
<dbReference type="Gene3D" id="4.10.520.10">
    <property type="entry name" value="IHF-like DNA-binding proteins"/>
    <property type="match status" value="1"/>
</dbReference>
<dbReference type="HAMAP" id="MF_00380">
    <property type="entry name" value="IHF_alpha"/>
    <property type="match status" value="1"/>
</dbReference>
<dbReference type="InterPro" id="IPR000119">
    <property type="entry name" value="Hist_DNA-bd"/>
</dbReference>
<dbReference type="InterPro" id="IPR020816">
    <property type="entry name" value="Histone-like_DNA-bd_CS"/>
</dbReference>
<dbReference type="InterPro" id="IPR010992">
    <property type="entry name" value="IHF-like_DNA-bd_dom_sf"/>
</dbReference>
<dbReference type="InterPro" id="IPR005684">
    <property type="entry name" value="IHF_alpha"/>
</dbReference>
<dbReference type="NCBIfam" id="TIGR00987">
    <property type="entry name" value="himA"/>
    <property type="match status" value="1"/>
</dbReference>
<dbReference type="NCBIfam" id="NF001401">
    <property type="entry name" value="PRK00285.1"/>
    <property type="match status" value="1"/>
</dbReference>
<dbReference type="PANTHER" id="PTHR33175">
    <property type="entry name" value="DNA-BINDING PROTEIN HU"/>
    <property type="match status" value="1"/>
</dbReference>
<dbReference type="PANTHER" id="PTHR33175:SF2">
    <property type="entry name" value="INTEGRATION HOST FACTOR SUBUNIT ALPHA"/>
    <property type="match status" value="1"/>
</dbReference>
<dbReference type="Pfam" id="PF00216">
    <property type="entry name" value="Bac_DNA_binding"/>
    <property type="match status" value="1"/>
</dbReference>
<dbReference type="PRINTS" id="PR01727">
    <property type="entry name" value="DNABINDINGHU"/>
</dbReference>
<dbReference type="SMART" id="SM00411">
    <property type="entry name" value="BHL"/>
    <property type="match status" value="1"/>
</dbReference>
<dbReference type="SUPFAM" id="SSF47729">
    <property type="entry name" value="IHF-like DNA-binding proteins"/>
    <property type="match status" value="1"/>
</dbReference>
<dbReference type="PROSITE" id="PS00045">
    <property type="entry name" value="HISTONE_LIKE"/>
    <property type="match status" value="1"/>
</dbReference>
<organism>
    <name type="scientific">Nitrosomonas eutropha (strain DSM 101675 / C91 / Nm57)</name>
    <dbReference type="NCBI Taxonomy" id="335283"/>
    <lineage>
        <taxon>Bacteria</taxon>
        <taxon>Pseudomonadati</taxon>
        <taxon>Pseudomonadota</taxon>
        <taxon>Betaproteobacteria</taxon>
        <taxon>Nitrosomonadales</taxon>
        <taxon>Nitrosomonadaceae</taxon>
        <taxon>Nitrosomonas</taxon>
    </lineage>
</organism>
<comment type="function">
    <text evidence="1">This protein is one of the two subunits of integration host factor, a specific DNA-binding protein that functions in genetic recombination as well as in transcriptional and translational control.</text>
</comment>
<comment type="subunit">
    <text evidence="1">Heterodimer of an alpha and a beta chain.</text>
</comment>
<comment type="similarity">
    <text evidence="1">Belongs to the bacterial histone-like protein family.</text>
</comment>